<comment type="function">
    <text evidence="1">May be involved in the control of excitability of cortical neurons.</text>
</comment>
<comment type="subunit">
    <text evidence="1">Interacts with CUL3.</text>
</comment>
<comment type="subcellular location">
    <subcellularLocation>
        <location evidence="1">Cell membrane</location>
    </subcellularLocation>
    <subcellularLocation>
        <location evidence="1">Cytoplasm</location>
        <location evidence="1">Cytosol</location>
    </subcellularLocation>
</comment>
<proteinExistence type="evidence at transcript level"/>
<feature type="chain" id="PRO_0000369239" description="BTB/POZ domain-containing protein KCTD7">
    <location>
        <begin position="1"/>
        <end position="289"/>
    </location>
</feature>
<feature type="domain" description="BTB">
    <location>
        <begin position="53"/>
        <end position="141"/>
    </location>
</feature>
<feature type="region of interest" description="Disordered" evidence="2">
    <location>
        <begin position="1"/>
        <end position="40"/>
    </location>
</feature>
<keyword id="KW-1003">Cell membrane</keyword>
<keyword id="KW-0963">Cytoplasm</keyword>
<keyword id="KW-0472">Membrane</keyword>
<keyword id="KW-1185">Reference proteome</keyword>
<organism>
    <name type="scientific">Bos taurus</name>
    <name type="common">Bovine</name>
    <dbReference type="NCBI Taxonomy" id="9913"/>
    <lineage>
        <taxon>Eukaryota</taxon>
        <taxon>Metazoa</taxon>
        <taxon>Chordata</taxon>
        <taxon>Craniata</taxon>
        <taxon>Vertebrata</taxon>
        <taxon>Euteleostomi</taxon>
        <taxon>Mammalia</taxon>
        <taxon>Eutheria</taxon>
        <taxon>Laurasiatheria</taxon>
        <taxon>Artiodactyla</taxon>
        <taxon>Ruminantia</taxon>
        <taxon>Pecora</taxon>
        <taxon>Bovidae</taxon>
        <taxon>Bovinae</taxon>
        <taxon>Bos</taxon>
    </lineage>
</organism>
<accession>A4IFB4</accession>
<gene>
    <name type="primary">KCTD7</name>
</gene>
<evidence type="ECO:0000250" key="1"/>
<evidence type="ECO:0000256" key="2">
    <source>
        <dbReference type="SAM" id="MobiDB-lite"/>
    </source>
</evidence>
<reference key="1">
    <citation type="submission" date="2007-03" db="EMBL/GenBank/DDBJ databases">
        <authorList>
            <consortium name="NIH - Mammalian Gene Collection (MGC) project"/>
        </authorList>
    </citation>
    <scope>NUCLEOTIDE SEQUENCE [LARGE SCALE MRNA]</scope>
    <source>
        <strain>Hereford</strain>
        <tissue>Ascending colon</tissue>
    </source>
</reference>
<sequence>MVVVTGREPDSRRPDGAMSSSDAEDDFLEPATPTATQAGHSLPLLPQEFPEVVPLNIGGAHFTTRLSTLRRYEDTMLAAMFSGRHYIPTDAEGRYFIDRDGAHFGDVLNFLRSGDLPPRERVRAVYKEAQYYAIGPLLEQLENMQPLKGEKVRQAFLGLMPYYKDHLERIVEIARLRAVQRKARFAKLKVCVFKEEMPITPYECPLLNSLRFERSESDGQLFEHHCEVDVSFGPWEAVADVYDLLHCLVTDLSAQGLTVDHQCIGVCDKHLINHYYCKRPIYEFKITWW</sequence>
<dbReference type="EMBL" id="BC134499">
    <property type="protein sequence ID" value="AAI34500.1"/>
    <property type="molecule type" value="mRNA"/>
</dbReference>
<dbReference type="RefSeq" id="NP_001096015.1">
    <property type="nucleotide sequence ID" value="NM_001102545.1"/>
</dbReference>
<dbReference type="SMR" id="A4IFB4"/>
<dbReference type="FunCoup" id="A4IFB4">
    <property type="interactions" value="1038"/>
</dbReference>
<dbReference type="STRING" id="9913.ENSBTAP00000073781"/>
<dbReference type="PaxDb" id="9913-ENSBTAP00000023179"/>
<dbReference type="GeneID" id="100124502"/>
<dbReference type="KEGG" id="bta:100124502"/>
<dbReference type="CTD" id="154881"/>
<dbReference type="VEuPathDB" id="HostDB:ENSBTAG00000017435"/>
<dbReference type="eggNOG" id="KOG2723">
    <property type="taxonomic scope" value="Eukaryota"/>
</dbReference>
<dbReference type="InParanoid" id="A4IFB4"/>
<dbReference type="OMA" id="IAAEQQC"/>
<dbReference type="OrthoDB" id="2414723at2759"/>
<dbReference type="Reactome" id="R-BTA-8951664">
    <property type="pathway name" value="Neddylation"/>
</dbReference>
<dbReference type="Reactome" id="R-BTA-983168">
    <property type="pathway name" value="Antigen processing: Ubiquitination &amp; Proteasome degradation"/>
</dbReference>
<dbReference type="Proteomes" id="UP000009136">
    <property type="component" value="Chromosome 25"/>
</dbReference>
<dbReference type="Bgee" id="ENSBTAG00000017435">
    <property type="expression patterns" value="Expressed in pons and 103 other cell types or tissues"/>
</dbReference>
<dbReference type="GO" id="GO:0005829">
    <property type="term" value="C:cytosol"/>
    <property type="evidence" value="ECO:0007669"/>
    <property type="project" value="UniProtKB-SubCell"/>
</dbReference>
<dbReference type="GO" id="GO:0005886">
    <property type="term" value="C:plasma membrane"/>
    <property type="evidence" value="ECO:0000318"/>
    <property type="project" value="GO_Central"/>
</dbReference>
<dbReference type="GO" id="GO:0060081">
    <property type="term" value="P:membrane hyperpolarization"/>
    <property type="evidence" value="ECO:0000318"/>
    <property type="project" value="GO_Central"/>
</dbReference>
<dbReference type="GO" id="GO:0051260">
    <property type="term" value="P:protein homooligomerization"/>
    <property type="evidence" value="ECO:0007669"/>
    <property type="project" value="InterPro"/>
</dbReference>
<dbReference type="CDD" id="cd18366">
    <property type="entry name" value="BTB_POZ_KCTD7"/>
    <property type="match status" value="1"/>
</dbReference>
<dbReference type="FunFam" id="3.30.710.10:FF:000046">
    <property type="entry name" value="BTB/POZ domain-containing protein KCTD7 isoform X1"/>
    <property type="match status" value="1"/>
</dbReference>
<dbReference type="Gene3D" id="3.30.710.10">
    <property type="entry name" value="Potassium Channel Kv1.1, Chain A"/>
    <property type="match status" value="1"/>
</dbReference>
<dbReference type="InterPro" id="IPR000210">
    <property type="entry name" value="BTB/POZ_dom"/>
</dbReference>
<dbReference type="InterPro" id="IPR011333">
    <property type="entry name" value="SKP1/BTB/POZ_sf"/>
</dbReference>
<dbReference type="InterPro" id="IPR003131">
    <property type="entry name" value="T1-type_BTB"/>
</dbReference>
<dbReference type="PANTHER" id="PTHR14499:SF122">
    <property type="entry name" value="BTB_POZ DOMAIN-CONTAINING PROTEIN KCTD7"/>
    <property type="match status" value="1"/>
</dbReference>
<dbReference type="PANTHER" id="PTHR14499">
    <property type="entry name" value="POTASSIUM CHANNEL TETRAMERIZATION DOMAIN-CONTAINING"/>
    <property type="match status" value="1"/>
</dbReference>
<dbReference type="Pfam" id="PF02214">
    <property type="entry name" value="BTB_2"/>
    <property type="match status" value="1"/>
</dbReference>
<dbReference type="SMART" id="SM00225">
    <property type="entry name" value="BTB"/>
    <property type="match status" value="1"/>
</dbReference>
<dbReference type="SUPFAM" id="SSF54695">
    <property type="entry name" value="POZ domain"/>
    <property type="match status" value="1"/>
</dbReference>
<name>KCTD7_BOVIN</name>
<protein>
    <recommendedName>
        <fullName>BTB/POZ domain-containing protein KCTD7</fullName>
    </recommendedName>
</protein>